<protein>
    <recommendedName>
        <fullName>Cytochrome b</fullName>
    </recommendedName>
    <alternativeName>
        <fullName>Complex III subunit 3</fullName>
    </alternativeName>
    <alternativeName>
        <fullName>Complex III subunit III</fullName>
    </alternativeName>
    <alternativeName>
        <fullName>Cytochrome b-c1 complex subunit 3</fullName>
    </alternativeName>
    <alternativeName>
        <fullName>Ubiquinol-cytochrome-c reductase complex cytochrome b subunit</fullName>
    </alternativeName>
</protein>
<accession>O48039</accession>
<feature type="chain" id="PRO_0000060811" description="Cytochrome b">
    <location>
        <begin position="1"/>
        <end position="370"/>
    </location>
</feature>
<feature type="transmembrane region" description="Helical" evidence="2">
    <location>
        <begin position="25"/>
        <end position="45"/>
    </location>
</feature>
<feature type="transmembrane region" description="Helical" evidence="2">
    <location>
        <begin position="69"/>
        <end position="90"/>
    </location>
</feature>
<feature type="transmembrane region" description="Helical" evidence="2">
    <location>
        <begin position="105"/>
        <end position="125"/>
    </location>
</feature>
<feature type="transmembrane region" description="Helical" evidence="2">
    <location>
        <begin position="170"/>
        <end position="190"/>
    </location>
</feature>
<feature type="transmembrane region" description="Helical" evidence="2">
    <location>
        <begin position="218"/>
        <end position="238"/>
    </location>
</feature>
<feature type="transmembrane region" description="Helical" evidence="2">
    <location>
        <begin position="280"/>
        <end position="300"/>
    </location>
</feature>
<feature type="transmembrane region" description="Helical" evidence="2">
    <location>
        <begin position="312"/>
        <end position="332"/>
    </location>
</feature>
<feature type="transmembrane region" description="Helical" evidence="2">
    <location>
        <begin position="339"/>
        <end position="358"/>
    </location>
</feature>
<feature type="binding site" description="axial binding residue" evidence="2">
    <location>
        <position position="75"/>
    </location>
    <ligand>
        <name>heme b</name>
        <dbReference type="ChEBI" id="CHEBI:60344"/>
        <label>b562</label>
    </ligand>
    <ligandPart>
        <name>Fe</name>
        <dbReference type="ChEBI" id="CHEBI:18248"/>
    </ligandPart>
</feature>
<feature type="binding site" description="axial binding residue" evidence="2">
    <location>
        <position position="89"/>
    </location>
    <ligand>
        <name>heme b</name>
        <dbReference type="ChEBI" id="CHEBI:60344"/>
        <label>b566</label>
    </ligand>
    <ligandPart>
        <name>Fe</name>
        <dbReference type="ChEBI" id="CHEBI:18248"/>
    </ligandPart>
</feature>
<feature type="binding site" description="axial binding residue" evidence="2">
    <location>
        <position position="174"/>
    </location>
    <ligand>
        <name>heme b</name>
        <dbReference type="ChEBI" id="CHEBI:60344"/>
        <label>b562</label>
    </ligand>
    <ligandPart>
        <name>Fe</name>
        <dbReference type="ChEBI" id="CHEBI:18248"/>
    </ligandPart>
</feature>
<feature type="binding site" description="axial binding residue" evidence="2">
    <location>
        <position position="188"/>
    </location>
    <ligand>
        <name>heme b</name>
        <dbReference type="ChEBI" id="CHEBI:60344"/>
        <label>b566</label>
    </ligand>
    <ligandPart>
        <name>Fe</name>
        <dbReference type="ChEBI" id="CHEBI:18248"/>
    </ligandPart>
</feature>
<feature type="binding site" evidence="2">
    <location>
        <position position="193"/>
    </location>
    <ligand>
        <name>a ubiquinone</name>
        <dbReference type="ChEBI" id="CHEBI:16389"/>
    </ligand>
</feature>
<organism>
    <name type="scientific">Corallus hortulanus enydris</name>
    <name type="common">Garden tree boa</name>
    <name type="synonym">Corallus enydris</name>
    <dbReference type="NCBI Taxonomy" id="51862"/>
    <lineage>
        <taxon>Eukaryota</taxon>
        <taxon>Metazoa</taxon>
        <taxon>Chordata</taxon>
        <taxon>Craniata</taxon>
        <taxon>Vertebrata</taxon>
        <taxon>Euteleostomi</taxon>
        <taxon>Lepidosauria</taxon>
        <taxon>Squamata</taxon>
        <taxon>Bifurcata</taxon>
        <taxon>Unidentata</taxon>
        <taxon>Episquamata</taxon>
        <taxon>Toxicofera</taxon>
        <taxon>Serpentes</taxon>
        <taxon>Henophidia</taxon>
        <taxon>Boidae</taxon>
        <taxon>Boinae</taxon>
        <taxon>Corallus</taxon>
        <taxon>Corallus hortulana</taxon>
    </lineage>
</organism>
<keyword id="KW-0249">Electron transport</keyword>
<keyword id="KW-0349">Heme</keyword>
<keyword id="KW-0408">Iron</keyword>
<keyword id="KW-0472">Membrane</keyword>
<keyword id="KW-0479">Metal-binding</keyword>
<keyword id="KW-0496">Mitochondrion</keyword>
<keyword id="KW-0999">Mitochondrion inner membrane</keyword>
<keyword id="KW-0679">Respiratory chain</keyword>
<keyword id="KW-0812">Transmembrane</keyword>
<keyword id="KW-1133">Transmembrane helix</keyword>
<keyword id="KW-0813">Transport</keyword>
<keyword id="KW-0830">Ubiquinone</keyword>
<proteinExistence type="inferred from homology"/>
<reference key="1">
    <citation type="thesis" date="1997" institute="Queen's University / Kingston" country="Canada">
        <title>Hic Sunt Serpentes -- molecular phylogenetics and the Boidae (Serpentes: Booidea).</title>
        <authorList>
            <person name="Campbell B.N."/>
        </authorList>
    </citation>
    <scope>NUCLEOTIDE SEQUENCE [GENOMIC DNA]</scope>
</reference>
<name>CYB_CORHE</name>
<evidence type="ECO:0000250" key="1"/>
<evidence type="ECO:0000250" key="2">
    <source>
        <dbReference type="UniProtKB" id="P00157"/>
    </source>
</evidence>
<evidence type="ECO:0000255" key="3">
    <source>
        <dbReference type="PROSITE-ProRule" id="PRU00967"/>
    </source>
</evidence>
<evidence type="ECO:0000255" key="4">
    <source>
        <dbReference type="PROSITE-ProRule" id="PRU00968"/>
    </source>
</evidence>
<sequence>MPHQQMLMLFGLLPVATNISTWWNFGSMLLTCSALQVLTGFFLAVHYTANIDLAFSSVVHIMRDVPYGWMMQNLHAMGASMFFICIYIHIARGLYYGSYLNKETWLSGTTLLIMLMATAFFGYVLPWGQMSFWAATVITNLLTAIPYLGTTMTTWLWGGFAINDPTLTRFFALHFILPFGIISFSSLHVMLLHEEGSSNPLGTNSDIDKIPFHPYHTYKDLFMLSVMITLLLTMISFYPDIFNDPDNFSKANPLVTPQHIKPEWYFLFAYGILRSIPNKLGGALALAMSIMILLTMPFTHTSKLRSMMFRPFMQLMFWTFAATFLVITWTATKPVEPPFTMISQVAALIYFLFFISNPIMGWMENKIMKV</sequence>
<comment type="function">
    <text evidence="2">Component of the ubiquinol-cytochrome c reductase complex (complex III or cytochrome b-c1 complex) that is part of the mitochondrial respiratory chain. The b-c1 complex mediates electron transfer from ubiquinol to cytochrome c. Contributes to the generation of a proton gradient across the mitochondrial membrane that is then used for ATP synthesis.</text>
</comment>
<comment type="cofactor">
    <cofactor evidence="2">
        <name>heme b</name>
        <dbReference type="ChEBI" id="CHEBI:60344"/>
    </cofactor>
    <text evidence="2">Binds 2 heme b groups non-covalently.</text>
</comment>
<comment type="subunit">
    <text evidence="2">The cytochrome bc1 complex contains 3 respiratory subunits (MT-CYB, CYC1 and UQCRFS1), 2 core proteins (UQCRC1 and UQCRC2) and probably 6 low-molecular weight proteins.</text>
</comment>
<comment type="subcellular location">
    <subcellularLocation>
        <location evidence="2">Mitochondrion inner membrane</location>
        <topology evidence="2">Multi-pass membrane protein</topology>
    </subcellularLocation>
</comment>
<comment type="miscellaneous">
    <text evidence="1">Heme 1 (or BL or b562) is low-potential and absorbs at about 562 nm, and heme 2 (or BH or b566) is high-potential and absorbs at about 566 nm.</text>
</comment>
<comment type="similarity">
    <text evidence="3 4">Belongs to the cytochrome b family.</text>
</comment>
<comment type="caution">
    <text evidence="2">The full-length protein contains only eight transmembrane helices, not nine as predicted by bioinformatics tools.</text>
</comment>
<dbReference type="EMBL" id="U69770">
    <property type="protein sequence ID" value="AAC01800.1"/>
    <property type="molecule type" value="Genomic_DNA"/>
</dbReference>
<dbReference type="SMR" id="O48039"/>
<dbReference type="GO" id="GO:0005743">
    <property type="term" value="C:mitochondrial inner membrane"/>
    <property type="evidence" value="ECO:0007669"/>
    <property type="project" value="UniProtKB-SubCell"/>
</dbReference>
<dbReference type="GO" id="GO:0045275">
    <property type="term" value="C:respiratory chain complex III"/>
    <property type="evidence" value="ECO:0007669"/>
    <property type="project" value="InterPro"/>
</dbReference>
<dbReference type="GO" id="GO:0046872">
    <property type="term" value="F:metal ion binding"/>
    <property type="evidence" value="ECO:0007669"/>
    <property type="project" value="UniProtKB-KW"/>
</dbReference>
<dbReference type="GO" id="GO:0008121">
    <property type="term" value="F:ubiquinol-cytochrome-c reductase activity"/>
    <property type="evidence" value="ECO:0007669"/>
    <property type="project" value="InterPro"/>
</dbReference>
<dbReference type="GO" id="GO:0006122">
    <property type="term" value="P:mitochondrial electron transport, ubiquinol to cytochrome c"/>
    <property type="evidence" value="ECO:0007669"/>
    <property type="project" value="TreeGrafter"/>
</dbReference>
<dbReference type="CDD" id="cd00290">
    <property type="entry name" value="cytochrome_b_C"/>
    <property type="match status" value="1"/>
</dbReference>
<dbReference type="CDD" id="cd00284">
    <property type="entry name" value="Cytochrome_b_N"/>
    <property type="match status" value="1"/>
</dbReference>
<dbReference type="Gene3D" id="1.20.810.10">
    <property type="entry name" value="Cytochrome Bc1 Complex, Chain C"/>
    <property type="match status" value="1"/>
</dbReference>
<dbReference type="InterPro" id="IPR005798">
    <property type="entry name" value="Cyt_b/b6_C"/>
</dbReference>
<dbReference type="InterPro" id="IPR036150">
    <property type="entry name" value="Cyt_b/b6_C_sf"/>
</dbReference>
<dbReference type="InterPro" id="IPR005797">
    <property type="entry name" value="Cyt_b/b6_N"/>
</dbReference>
<dbReference type="InterPro" id="IPR027387">
    <property type="entry name" value="Cytb/b6-like_sf"/>
</dbReference>
<dbReference type="InterPro" id="IPR030689">
    <property type="entry name" value="Cytochrome_b"/>
</dbReference>
<dbReference type="InterPro" id="IPR048260">
    <property type="entry name" value="Cytochrome_b_C_euk/bac"/>
</dbReference>
<dbReference type="InterPro" id="IPR048259">
    <property type="entry name" value="Cytochrome_b_N_euk/bac"/>
</dbReference>
<dbReference type="InterPro" id="IPR016174">
    <property type="entry name" value="Di-haem_cyt_TM"/>
</dbReference>
<dbReference type="PANTHER" id="PTHR19271">
    <property type="entry name" value="CYTOCHROME B"/>
    <property type="match status" value="1"/>
</dbReference>
<dbReference type="PANTHER" id="PTHR19271:SF16">
    <property type="entry name" value="CYTOCHROME B"/>
    <property type="match status" value="1"/>
</dbReference>
<dbReference type="Pfam" id="PF00032">
    <property type="entry name" value="Cytochrom_B_C"/>
    <property type="match status" value="1"/>
</dbReference>
<dbReference type="Pfam" id="PF00033">
    <property type="entry name" value="Cytochrome_B"/>
    <property type="match status" value="1"/>
</dbReference>
<dbReference type="PIRSF" id="PIRSF038885">
    <property type="entry name" value="COB"/>
    <property type="match status" value="1"/>
</dbReference>
<dbReference type="SUPFAM" id="SSF81648">
    <property type="entry name" value="a domain/subunit of cytochrome bc1 complex (Ubiquinol-cytochrome c reductase)"/>
    <property type="match status" value="1"/>
</dbReference>
<dbReference type="SUPFAM" id="SSF81342">
    <property type="entry name" value="Transmembrane di-heme cytochromes"/>
    <property type="match status" value="1"/>
</dbReference>
<dbReference type="PROSITE" id="PS51003">
    <property type="entry name" value="CYTB_CTER"/>
    <property type="match status" value="1"/>
</dbReference>
<dbReference type="PROSITE" id="PS51002">
    <property type="entry name" value="CYTB_NTER"/>
    <property type="match status" value="1"/>
</dbReference>
<gene>
    <name type="primary">MT-CYB</name>
    <name type="synonym">COB</name>
    <name type="synonym">CYTB</name>
    <name type="synonym">MTCYB</name>
</gene>
<geneLocation type="mitochondrion"/>